<name>KAE1_CHAGB</name>
<organism>
    <name type="scientific">Chaetomium globosum (strain ATCC 6205 / CBS 148.51 / DSM 1962 / NBRC 6347 / NRRL 1970)</name>
    <name type="common">Soil fungus</name>
    <dbReference type="NCBI Taxonomy" id="306901"/>
    <lineage>
        <taxon>Eukaryota</taxon>
        <taxon>Fungi</taxon>
        <taxon>Dikarya</taxon>
        <taxon>Ascomycota</taxon>
        <taxon>Pezizomycotina</taxon>
        <taxon>Sordariomycetes</taxon>
        <taxon>Sordariomycetidae</taxon>
        <taxon>Sordariales</taxon>
        <taxon>Chaetomiaceae</taxon>
        <taxon>Chaetomium</taxon>
    </lineage>
</organism>
<proteinExistence type="inferred from homology"/>
<comment type="function">
    <text evidence="1">Component of the EKC/KEOPS complex that is required for the formation of a threonylcarbamoyl group on adenosine at position 37 (t(6)A37) in tRNAs that read codons beginning with adenine. The complex is probably involved in the transfer of the threonylcarbamoyl moiety of threonylcarbamoyl-AMP (TC-AMP) to the N6 group of A37. KAE1 likely plays a direct catalytic role in this reaction, but requires other protein(s) of the complex to fulfill this activity. The EKC/KEOPS complex also promotes both telomere uncapping and telomere elongation. The complex is required for efficient recruitment of transcriptional coactivators.</text>
</comment>
<comment type="catalytic activity">
    <reaction evidence="1">
        <text>L-threonylcarbamoyladenylate + adenosine(37) in tRNA = N(6)-L-threonylcarbamoyladenosine(37) in tRNA + AMP + H(+)</text>
        <dbReference type="Rhea" id="RHEA:37059"/>
        <dbReference type="Rhea" id="RHEA-COMP:10162"/>
        <dbReference type="Rhea" id="RHEA-COMP:10163"/>
        <dbReference type="ChEBI" id="CHEBI:15378"/>
        <dbReference type="ChEBI" id="CHEBI:73682"/>
        <dbReference type="ChEBI" id="CHEBI:74411"/>
        <dbReference type="ChEBI" id="CHEBI:74418"/>
        <dbReference type="ChEBI" id="CHEBI:456215"/>
        <dbReference type="EC" id="2.3.1.234"/>
    </reaction>
</comment>
<comment type="cofactor">
    <cofactor evidence="1">
        <name>a divalent metal cation</name>
        <dbReference type="ChEBI" id="CHEBI:60240"/>
    </cofactor>
    <text evidence="1">Binds 1 divalent metal cation per subunit.</text>
</comment>
<comment type="subunit">
    <text evidence="1">Component of the EKC/KEOPS complex composed of at least BUD32, CGI121, GON7, KAE1 and PCC1; the whole complex dimerizes.</text>
</comment>
<comment type="subcellular location">
    <subcellularLocation>
        <location evidence="1">Cytoplasm</location>
    </subcellularLocation>
    <subcellularLocation>
        <location evidence="1">Nucleus</location>
    </subcellularLocation>
</comment>
<comment type="similarity">
    <text evidence="1">Belongs to the KAE1 / TsaD family.</text>
</comment>
<gene>
    <name evidence="1" type="primary">KAE1</name>
    <name type="ORF">CHGG_07268</name>
</gene>
<feature type="chain" id="PRO_0000278931" description="tRNA N6-adenosine threonylcarbamoyltransferase">
    <location>
        <begin position="1"/>
        <end position="356"/>
    </location>
</feature>
<feature type="binding site" evidence="1">
    <location>
        <position position="122"/>
    </location>
    <ligand>
        <name>a divalent metal cation</name>
        <dbReference type="ChEBI" id="CHEBI:60240"/>
    </ligand>
</feature>
<feature type="binding site" evidence="1">
    <location>
        <position position="126"/>
    </location>
    <ligand>
        <name>a divalent metal cation</name>
        <dbReference type="ChEBI" id="CHEBI:60240"/>
    </ligand>
</feature>
<feature type="binding site" evidence="1">
    <location>
        <begin position="143"/>
        <end position="147"/>
    </location>
    <ligand>
        <name>substrate</name>
    </ligand>
</feature>
<feature type="binding site" evidence="1">
    <location>
        <position position="143"/>
    </location>
    <ligand>
        <name>a divalent metal cation</name>
        <dbReference type="ChEBI" id="CHEBI:60240"/>
    </ligand>
</feature>
<feature type="binding site" evidence="1">
    <location>
        <position position="175"/>
    </location>
    <ligand>
        <name>substrate</name>
    </ligand>
</feature>
<feature type="binding site" evidence="1">
    <location>
        <position position="190"/>
    </location>
    <ligand>
        <name>substrate</name>
    </ligand>
</feature>
<feature type="binding site" evidence="1">
    <location>
        <position position="194"/>
    </location>
    <ligand>
        <name>substrate</name>
    </ligand>
</feature>
<feature type="binding site" evidence="1">
    <location>
        <position position="287"/>
    </location>
    <ligand>
        <name>substrate</name>
    </ligand>
</feature>
<feature type="binding site" evidence="1">
    <location>
        <position position="315"/>
    </location>
    <ligand>
        <name>a divalent metal cation</name>
        <dbReference type="ChEBI" id="CHEBI:60240"/>
    </ligand>
</feature>
<sequence>MGLDITQKKRRIALGCEGSANKLGIGVILHEGDTSTVLSNVRHTFVSPAGTGFLPKDTAQHHRAFFVRVAKQALSDAGIRIADIDCICYTRGPGMGGPLASVAVAARTLALLWGKELVGVNHCVGHIEMGRTITGADHPVVLYVSGGNTQVIAYAEQRYRIFGETLDIAVGNCLDRFARALNISNDPAPGYNIEVLARKGGRVLLDLPYAVKGMDCSFSGILTRAEELAAQMKANEGKGTDGEPFTGADLCFSLQETVFAMLVEITERAMAHVGSNQVLIVGGVGCNERLQEMMGLMAADRGGSVYATDERFCIDNGIMIAHAGLLAYETGFRTPIEESTCTQRFRTDEVLVKWRK</sequence>
<keyword id="KW-0010">Activator</keyword>
<keyword id="KW-0012">Acyltransferase</keyword>
<keyword id="KW-0963">Cytoplasm</keyword>
<keyword id="KW-0479">Metal-binding</keyword>
<keyword id="KW-0539">Nucleus</keyword>
<keyword id="KW-1185">Reference proteome</keyword>
<keyword id="KW-0804">Transcription</keyword>
<keyword id="KW-0805">Transcription regulation</keyword>
<keyword id="KW-0808">Transferase</keyword>
<keyword id="KW-0819">tRNA processing</keyword>
<protein>
    <recommendedName>
        <fullName evidence="1">tRNA N6-adenosine threonylcarbamoyltransferase</fullName>
        <ecNumber evidence="1">2.3.1.234</ecNumber>
    </recommendedName>
    <alternativeName>
        <fullName>N6-L-threonylcarbamoyladenine synthase</fullName>
        <shortName>t(6)A synthase</shortName>
    </alternativeName>
    <alternativeName>
        <fullName evidence="1">t(6)A37 threonylcarbamoyladenosine biosynthesis protein KAE1</fullName>
    </alternativeName>
    <alternativeName>
        <fullName evidence="1">tRNA threonylcarbamoyladenosine biosynthesis protein KAE1</fullName>
    </alternativeName>
</protein>
<reference key="1">
    <citation type="journal article" date="2015" name="Genome Announc.">
        <title>Draft genome sequence of the cellulolytic fungus Chaetomium globosum.</title>
        <authorList>
            <person name="Cuomo C.A."/>
            <person name="Untereiner W.A."/>
            <person name="Ma L.-J."/>
            <person name="Grabherr M."/>
            <person name="Birren B.W."/>
        </authorList>
    </citation>
    <scope>NUCLEOTIDE SEQUENCE [LARGE SCALE GENOMIC DNA]</scope>
    <source>
        <strain>ATCC 6205 / CBS 148.51 / DSM 1962 / NBRC 6347 / NRRL 1970</strain>
    </source>
</reference>
<evidence type="ECO:0000255" key="1">
    <source>
        <dbReference type="HAMAP-Rule" id="MF_03180"/>
    </source>
</evidence>
<dbReference type="EC" id="2.3.1.234" evidence="1"/>
<dbReference type="EMBL" id="CH408033">
    <property type="protein sequence ID" value="EAQ86015.1"/>
    <property type="molecule type" value="Genomic_DNA"/>
</dbReference>
<dbReference type="RefSeq" id="XP_001224924.1">
    <property type="nucleotide sequence ID" value="XM_001224923.1"/>
</dbReference>
<dbReference type="SMR" id="Q2GXN6"/>
<dbReference type="FunCoup" id="Q2GXN6">
    <property type="interactions" value="531"/>
</dbReference>
<dbReference type="STRING" id="306901.Q2GXN6"/>
<dbReference type="GeneID" id="4394587"/>
<dbReference type="VEuPathDB" id="FungiDB:CHGG_07268"/>
<dbReference type="eggNOG" id="KOG2708">
    <property type="taxonomic scope" value="Eukaryota"/>
</dbReference>
<dbReference type="HOGENOM" id="CLU_023208_2_2_1"/>
<dbReference type="InParanoid" id="Q2GXN6"/>
<dbReference type="OMA" id="HHRSWVV"/>
<dbReference type="OrthoDB" id="10254073at2759"/>
<dbReference type="Proteomes" id="UP000001056">
    <property type="component" value="Unassembled WGS sequence"/>
</dbReference>
<dbReference type="GO" id="GO:0000785">
    <property type="term" value="C:chromatin"/>
    <property type="evidence" value="ECO:0007669"/>
    <property type="project" value="EnsemblFungi"/>
</dbReference>
<dbReference type="GO" id="GO:0005737">
    <property type="term" value="C:cytoplasm"/>
    <property type="evidence" value="ECO:0007669"/>
    <property type="project" value="UniProtKB-SubCell"/>
</dbReference>
<dbReference type="GO" id="GO:0000408">
    <property type="term" value="C:EKC/KEOPS complex"/>
    <property type="evidence" value="ECO:0007669"/>
    <property type="project" value="EnsemblFungi"/>
</dbReference>
<dbReference type="GO" id="GO:0005634">
    <property type="term" value="C:nucleus"/>
    <property type="evidence" value="ECO:0007669"/>
    <property type="project" value="UniProtKB-SubCell"/>
</dbReference>
<dbReference type="GO" id="GO:0031490">
    <property type="term" value="F:chromatin DNA binding"/>
    <property type="evidence" value="ECO:0007669"/>
    <property type="project" value="EnsemblFungi"/>
</dbReference>
<dbReference type="GO" id="GO:0046872">
    <property type="term" value="F:metal ion binding"/>
    <property type="evidence" value="ECO:0007669"/>
    <property type="project" value="UniProtKB-KW"/>
</dbReference>
<dbReference type="GO" id="GO:0061711">
    <property type="term" value="F:N(6)-L-threonylcarbamoyladenine synthase activity"/>
    <property type="evidence" value="ECO:0007669"/>
    <property type="project" value="UniProtKB-EC"/>
</dbReference>
<dbReference type="GO" id="GO:0008252">
    <property type="term" value="F:nucleotidase activity"/>
    <property type="evidence" value="ECO:0007669"/>
    <property type="project" value="EnsemblFungi"/>
</dbReference>
<dbReference type="GO" id="GO:0045944">
    <property type="term" value="P:positive regulation of transcription by RNA polymerase II"/>
    <property type="evidence" value="ECO:0007669"/>
    <property type="project" value="EnsemblFungi"/>
</dbReference>
<dbReference type="GO" id="GO:0000722">
    <property type="term" value="P:telomere maintenance via recombination"/>
    <property type="evidence" value="ECO:0007669"/>
    <property type="project" value="EnsemblFungi"/>
</dbReference>
<dbReference type="GO" id="GO:0002949">
    <property type="term" value="P:tRNA threonylcarbamoyladenosine modification"/>
    <property type="evidence" value="ECO:0007669"/>
    <property type="project" value="UniProtKB-UniRule"/>
</dbReference>
<dbReference type="CDD" id="cd24132">
    <property type="entry name" value="ASKHA_NBD_OSGEP_like_euk"/>
    <property type="match status" value="1"/>
</dbReference>
<dbReference type="FunFam" id="3.30.420.40:FF:000038">
    <property type="entry name" value="Probable tRNA N6-adenosine threonylcarbamoyltransferase"/>
    <property type="match status" value="1"/>
</dbReference>
<dbReference type="Gene3D" id="3.30.420.40">
    <property type="match status" value="2"/>
</dbReference>
<dbReference type="HAMAP" id="MF_01446">
    <property type="entry name" value="Kae1"/>
    <property type="match status" value="1"/>
</dbReference>
<dbReference type="InterPro" id="IPR043129">
    <property type="entry name" value="ATPase_NBD"/>
</dbReference>
<dbReference type="InterPro" id="IPR000905">
    <property type="entry name" value="Gcp-like_dom"/>
</dbReference>
<dbReference type="InterPro" id="IPR017861">
    <property type="entry name" value="KAE1/TsaD"/>
</dbReference>
<dbReference type="InterPro" id="IPR034680">
    <property type="entry name" value="Kae1_archaea_euk"/>
</dbReference>
<dbReference type="NCBIfam" id="TIGR03722">
    <property type="entry name" value="arch_KAE1"/>
    <property type="match status" value="1"/>
</dbReference>
<dbReference type="NCBIfam" id="TIGR00329">
    <property type="entry name" value="gcp_kae1"/>
    <property type="match status" value="1"/>
</dbReference>
<dbReference type="PANTHER" id="PTHR11735">
    <property type="entry name" value="TRNA N6-ADENOSINE THREONYLCARBAMOYLTRANSFERASE"/>
    <property type="match status" value="1"/>
</dbReference>
<dbReference type="PANTHER" id="PTHR11735:SF14">
    <property type="entry name" value="TRNA N6-ADENOSINE THREONYLCARBAMOYLTRANSFERASE"/>
    <property type="match status" value="1"/>
</dbReference>
<dbReference type="Pfam" id="PF00814">
    <property type="entry name" value="TsaD"/>
    <property type="match status" value="1"/>
</dbReference>
<dbReference type="PRINTS" id="PR00789">
    <property type="entry name" value="OSIALOPTASE"/>
</dbReference>
<dbReference type="SUPFAM" id="SSF53067">
    <property type="entry name" value="Actin-like ATPase domain"/>
    <property type="match status" value="1"/>
</dbReference>
<accession>Q2GXN6</accession>